<reference key="1">
    <citation type="journal article" date="2003" name="Mol. Microbiol.">
        <title>Genome-based analysis of virulence genes in a non-biofilm-forming Staphylococcus epidermidis strain (ATCC 12228).</title>
        <authorList>
            <person name="Zhang Y.-Q."/>
            <person name="Ren S.-X."/>
            <person name="Li H.-L."/>
            <person name="Wang Y.-X."/>
            <person name="Fu G."/>
            <person name="Yang J."/>
            <person name="Qin Z.-Q."/>
            <person name="Miao Y.-G."/>
            <person name="Wang W.-Y."/>
            <person name="Chen R.-S."/>
            <person name="Shen Y."/>
            <person name="Chen Z."/>
            <person name="Yuan Z.-H."/>
            <person name="Zhao G.-P."/>
            <person name="Qu D."/>
            <person name="Danchin A."/>
            <person name="Wen Y.-M."/>
        </authorList>
    </citation>
    <scope>NUCLEOTIDE SEQUENCE [LARGE SCALE GENOMIC DNA]</scope>
    <source>
        <strain>ATCC 12228 / FDA PCI 1200</strain>
    </source>
</reference>
<protein>
    <recommendedName>
        <fullName>Uncharacterized protein SE_2353</fullName>
    </recommendedName>
</protein>
<organism>
    <name type="scientific">Staphylococcus epidermidis (strain ATCC 12228 / FDA PCI 1200)</name>
    <dbReference type="NCBI Taxonomy" id="176280"/>
    <lineage>
        <taxon>Bacteria</taxon>
        <taxon>Bacillati</taxon>
        <taxon>Bacillota</taxon>
        <taxon>Bacilli</taxon>
        <taxon>Bacillales</taxon>
        <taxon>Staphylococcaceae</taxon>
        <taxon>Staphylococcus</taxon>
    </lineage>
</organism>
<evidence type="ECO:0000255" key="1"/>
<evidence type="ECO:0000256" key="2">
    <source>
        <dbReference type="SAM" id="MobiDB-lite"/>
    </source>
</evidence>
<gene>
    <name type="ordered locus">SE_2353</name>
</gene>
<sequence>MLTKEFAQRVELSEKQVRKIVQHLEERGYHLSKTEYRGREATDFKEDDIELFTDIANKVKQTNSYDLAFEELEKEKDFLQVIVKDEDSQLPTDQNVAQLVEDLRSEIQKMREERQMLGQMINQVHQQQQELKELQTDITTKLDSNAQSLKSIQNSQEAIQSAQEQQSKDIAKANELKDSELRSHFDSMSNSASISQSNVASQSTTASLSQSESANDSMSSSLSESNSITSESNTNSKSEIESKSTSTSEFLSESGSVSNSEKSESISHSQSTSATPSSQSTYQQQPKEEKKGFFARLFNL</sequence>
<keyword id="KW-0175">Coiled coil</keyword>
<dbReference type="EMBL" id="AE015929">
    <property type="protein sequence ID" value="AAO05996.1"/>
    <property type="molecule type" value="Genomic_DNA"/>
</dbReference>
<dbReference type="RefSeq" id="NP_765908.1">
    <property type="nucleotide sequence ID" value="NC_004461.1"/>
</dbReference>
<dbReference type="RefSeq" id="WP_001829387.1">
    <property type="nucleotide sequence ID" value="NZ_WBME01000004.1"/>
</dbReference>
<dbReference type="SMR" id="Q8CQQ7"/>
<dbReference type="KEGG" id="sep:SE_2353"/>
<dbReference type="PATRIC" id="fig|176280.10.peg.2296"/>
<dbReference type="eggNOG" id="COG5183">
    <property type="taxonomic scope" value="Bacteria"/>
</dbReference>
<dbReference type="HOGENOM" id="CLU_885403_0_0_9"/>
<dbReference type="OrthoDB" id="2414380at2"/>
<dbReference type="Proteomes" id="UP000001411">
    <property type="component" value="Chromosome"/>
</dbReference>
<proteinExistence type="predicted"/>
<accession>Q8CQQ7</accession>
<name>Y2353_STAES</name>
<feature type="chain" id="PRO_0000215535" description="Uncharacterized protein SE_2353">
    <location>
        <begin position="1"/>
        <end position="300"/>
    </location>
</feature>
<feature type="region of interest" description="Disordered" evidence="2">
    <location>
        <begin position="203"/>
        <end position="300"/>
    </location>
</feature>
<feature type="coiled-coil region" evidence="1">
    <location>
        <begin position="67"/>
        <end position="179"/>
    </location>
</feature>
<feature type="compositionally biased region" description="Low complexity" evidence="2">
    <location>
        <begin position="203"/>
        <end position="285"/>
    </location>
</feature>